<gene>
    <name evidence="1" type="primary">hemA</name>
    <name type="ordered locus">STM1777</name>
</gene>
<organism>
    <name type="scientific">Salmonella typhimurium (strain LT2 / SGSC1412 / ATCC 700720)</name>
    <dbReference type="NCBI Taxonomy" id="99287"/>
    <lineage>
        <taxon>Bacteria</taxon>
        <taxon>Pseudomonadati</taxon>
        <taxon>Pseudomonadota</taxon>
        <taxon>Gammaproteobacteria</taxon>
        <taxon>Enterobacterales</taxon>
        <taxon>Enterobacteriaceae</taxon>
        <taxon>Salmonella</taxon>
    </lineage>
</organism>
<name>HEM1_SALTY</name>
<feature type="chain" id="PRO_0000114064" description="Glutamyl-tRNA reductase">
    <location>
        <begin position="1"/>
        <end position="418"/>
    </location>
</feature>
<feature type="active site" description="Nucleophile" evidence="1">
    <location>
        <position position="50"/>
    </location>
</feature>
<feature type="binding site" evidence="1">
    <location>
        <begin position="49"/>
        <end position="52"/>
    </location>
    <ligand>
        <name>substrate</name>
    </ligand>
</feature>
<feature type="binding site" evidence="1">
    <location>
        <position position="109"/>
    </location>
    <ligand>
        <name>substrate</name>
    </ligand>
</feature>
<feature type="binding site" evidence="1">
    <location>
        <begin position="114"/>
        <end position="116"/>
    </location>
    <ligand>
        <name>substrate</name>
    </ligand>
</feature>
<feature type="binding site" evidence="1">
    <location>
        <position position="120"/>
    </location>
    <ligand>
        <name>substrate</name>
    </ligand>
</feature>
<feature type="binding site" evidence="1">
    <location>
        <begin position="189"/>
        <end position="194"/>
    </location>
    <ligand>
        <name>NADP(+)</name>
        <dbReference type="ChEBI" id="CHEBI:58349"/>
    </ligand>
</feature>
<feature type="site" description="Important for activity" evidence="1">
    <location>
        <position position="99"/>
    </location>
</feature>
<feature type="sequence conflict" description="In Ref. 1; AAA88610." evidence="2" ref="1">
    <original>E</original>
    <variation>R</variation>
    <location>
        <position position="139"/>
    </location>
</feature>
<accession>P0A1Q6</accession>
<accession>P13581</accession>
<keyword id="KW-0521">NADP</keyword>
<keyword id="KW-0560">Oxidoreductase</keyword>
<keyword id="KW-0627">Porphyrin biosynthesis</keyword>
<keyword id="KW-1185">Reference proteome</keyword>
<comment type="function">
    <text evidence="1">Catalyzes the NADPH-dependent reduction of glutamyl-tRNA(Glu) to glutamate 1-semialdehyde (GSA).</text>
</comment>
<comment type="catalytic activity">
    <reaction evidence="1">
        <text>(S)-4-amino-5-oxopentanoate + tRNA(Glu) + NADP(+) = L-glutamyl-tRNA(Glu) + NADPH + H(+)</text>
        <dbReference type="Rhea" id="RHEA:12344"/>
        <dbReference type="Rhea" id="RHEA-COMP:9663"/>
        <dbReference type="Rhea" id="RHEA-COMP:9680"/>
        <dbReference type="ChEBI" id="CHEBI:15378"/>
        <dbReference type="ChEBI" id="CHEBI:57501"/>
        <dbReference type="ChEBI" id="CHEBI:57783"/>
        <dbReference type="ChEBI" id="CHEBI:58349"/>
        <dbReference type="ChEBI" id="CHEBI:78442"/>
        <dbReference type="ChEBI" id="CHEBI:78520"/>
        <dbReference type="EC" id="1.2.1.70"/>
    </reaction>
</comment>
<comment type="pathway">
    <text evidence="1">Porphyrin-containing compound metabolism; protoporphyrin-IX biosynthesis; 5-aminolevulinate from L-glutamyl-tRNA(Glu): step 1/2.</text>
</comment>
<comment type="subunit">
    <text evidence="1">Homodimer.</text>
</comment>
<comment type="domain">
    <text evidence="1">Possesses an unusual extended V-shaped dimeric structure with each monomer consisting of three distinct domains arranged along a curved 'spinal' alpha-helix. The N-terminal catalytic domain specifically recognizes the glutamate moiety of the substrate. The second domain is the NADPH-binding domain, and the third C-terminal domain is responsible for dimerization.</text>
</comment>
<comment type="miscellaneous">
    <text evidence="1">During catalysis, the active site Cys acts as a nucleophile attacking the alpha-carbonyl group of tRNA-bound glutamate with the formation of a thioester intermediate between enzyme and glutamate, and the concomitant release of tRNA(Glu). The thioester intermediate is finally reduced by direct hydride transfer from NADPH, to form the product GSA.</text>
</comment>
<comment type="similarity">
    <text evidence="1">Belongs to the glutamyl-tRNA reductase family.</text>
</comment>
<sequence length="418" mass="46105">MTLLALGINHKTAPVSLRERVTFSPDTLDQALDSLLAQPMVQGGVVLSTCNRTELYLSVEEQDNLQEALIRWLCDYHNLNEDDLRNSLYWHQDNDAVSHLMRVASGLDSLVLGEPQILGQVKKAFADSQKGHLNASALERMFQKSFSVAKRVRTETDIGASAVSVAFAACTLARQIFESLSTVTVLLVGAGETIELVARHLREHKVQKMIIANRTRERAQALADEVGAEVISLSDIDARLQDADIIISSTASPLPIIGKGMVERALKSRRNQPMLLVDIAVPRDVEPEVGKLANAYLYSVDDLQSIISHNLAQRQAAAVEAETIVEQEASEFMAWLRAQGASETIREYRSQSEQIRDELTTKALSALQQGGDAQAILQDLAWKLTNRLIHAPTKSLQQAARDGDDERLNILRDSLGLE</sequence>
<evidence type="ECO:0000255" key="1">
    <source>
        <dbReference type="HAMAP-Rule" id="MF_00087"/>
    </source>
</evidence>
<evidence type="ECO:0000305" key="2"/>
<proteinExistence type="inferred from homology"/>
<dbReference type="EC" id="1.2.1.70" evidence="1"/>
<dbReference type="EMBL" id="J04243">
    <property type="protein sequence ID" value="AAA88610.1"/>
    <property type="molecule type" value="Genomic_DNA"/>
</dbReference>
<dbReference type="EMBL" id="AE006468">
    <property type="protein sequence ID" value="AAL20692.1"/>
    <property type="molecule type" value="Genomic_DNA"/>
</dbReference>
<dbReference type="PIR" id="A32661">
    <property type="entry name" value="BVEBHA"/>
</dbReference>
<dbReference type="RefSeq" id="NP_460733.1">
    <property type="nucleotide sequence ID" value="NC_003197.2"/>
</dbReference>
<dbReference type="RefSeq" id="WP_000173208.1">
    <property type="nucleotide sequence ID" value="NC_003197.2"/>
</dbReference>
<dbReference type="SMR" id="P0A1Q6"/>
<dbReference type="STRING" id="99287.STM1777"/>
<dbReference type="PaxDb" id="99287-STM1777"/>
<dbReference type="GeneID" id="1253296"/>
<dbReference type="KEGG" id="stm:STM1777"/>
<dbReference type="PATRIC" id="fig|99287.12.peg.1872"/>
<dbReference type="HOGENOM" id="CLU_035113_2_2_6"/>
<dbReference type="OMA" id="FAFKCAA"/>
<dbReference type="PhylomeDB" id="P0A1Q6"/>
<dbReference type="BioCyc" id="SENT99287:STM1777-MONOMER"/>
<dbReference type="UniPathway" id="UPA00251">
    <property type="reaction ID" value="UER00316"/>
</dbReference>
<dbReference type="Proteomes" id="UP000001014">
    <property type="component" value="Chromosome"/>
</dbReference>
<dbReference type="GO" id="GO:0008883">
    <property type="term" value="F:glutamyl-tRNA reductase activity"/>
    <property type="evidence" value="ECO:0000318"/>
    <property type="project" value="GO_Central"/>
</dbReference>
<dbReference type="GO" id="GO:0050661">
    <property type="term" value="F:NADP binding"/>
    <property type="evidence" value="ECO:0007669"/>
    <property type="project" value="InterPro"/>
</dbReference>
<dbReference type="GO" id="GO:0019353">
    <property type="term" value="P:protoporphyrinogen IX biosynthetic process from glutamate"/>
    <property type="evidence" value="ECO:0000318"/>
    <property type="project" value="GO_Central"/>
</dbReference>
<dbReference type="CDD" id="cd05213">
    <property type="entry name" value="NAD_bind_Glutamyl_tRNA_reduct"/>
    <property type="match status" value="1"/>
</dbReference>
<dbReference type="FunFam" id="3.30.460.30:FF:000001">
    <property type="entry name" value="Glutamyl-tRNA reductase"/>
    <property type="match status" value="1"/>
</dbReference>
<dbReference type="FunFam" id="3.40.50.720:FF:000031">
    <property type="entry name" value="Glutamyl-tRNA reductase"/>
    <property type="match status" value="1"/>
</dbReference>
<dbReference type="Gene3D" id="3.30.460.30">
    <property type="entry name" value="Glutamyl-tRNA reductase, N-terminal domain"/>
    <property type="match status" value="1"/>
</dbReference>
<dbReference type="Gene3D" id="3.40.50.720">
    <property type="entry name" value="NAD(P)-binding Rossmann-like Domain"/>
    <property type="match status" value="1"/>
</dbReference>
<dbReference type="HAMAP" id="MF_00087">
    <property type="entry name" value="Glu_tRNA_reductase"/>
    <property type="match status" value="1"/>
</dbReference>
<dbReference type="InterPro" id="IPR000343">
    <property type="entry name" value="4pyrrol_synth_GluRdtase"/>
</dbReference>
<dbReference type="InterPro" id="IPR015896">
    <property type="entry name" value="4pyrrol_synth_GluRdtase_dimer"/>
</dbReference>
<dbReference type="InterPro" id="IPR015895">
    <property type="entry name" value="4pyrrol_synth_GluRdtase_N"/>
</dbReference>
<dbReference type="InterPro" id="IPR018214">
    <property type="entry name" value="GluRdtase_CS"/>
</dbReference>
<dbReference type="InterPro" id="IPR036453">
    <property type="entry name" value="GluRdtase_dimer_dom_sf"/>
</dbReference>
<dbReference type="InterPro" id="IPR036343">
    <property type="entry name" value="GluRdtase_N_sf"/>
</dbReference>
<dbReference type="InterPro" id="IPR036291">
    <property type="entry name" value="NAD(P)-bd_dom_sf"/>
</dbReference>
<dbReference type="InterPro" id="IPR006151">
    <property type="entry name" value="Shikm_DH/Glu-tRNA_Rdtase"/>
</dbReference>
<dbReference type="NCBIfam" id="TIGR01035">
    <property type="entry name" value="hemA"/>
    <property type="match status" value="1"/>
</dbReference>
<dbReference type="PANTHER" id="PTHR43013">
    <property type="entry name" value="GLUTAMYL-TRNA REDUCTASE"/>
    <property type="match status" value="1"/>
</dbReference>
<dbReference type="PANTHER" id="PTHR43013:SF1">
    <property type="entry name" value="GLUTAMYL-TRNA REDUCTASE"/>
    <property type="match status" value="1"/>
</dbReference>
<dbReference type="Pfam" id="PF00745">
    <property type="entry name" value="GlutR_dimer"/>
    <property type="match status" value="1"/>
</dbReference>
<dbReference type="Pfam" id="PF05201">
    <property type="entry name" value="GlutR_N"/>
    <property type="match status" value="1"/>
</dbReference>
<dbReference type="Pfam" id="PF01488">
    <property type="entry name" value="Shikimate_DH"/>
    <property type="match status" value="1"/>
</dbReference>
<dbReference type="PIRSF" id="PIRSF000445">
    <property type="entry name" value="4pyrrol_synth_GluRdtase"/>
    <property type="match status" value="1"/>
</dbReference>
<dbReference type="SUPFAM" id="SSF69742">
    <property type="entry name" value="Glutamyl tRNA-reductase catalytic, N-terminal domain"/>
    <property type="match status" value="1"/>
</dbReference>
<dbReference type="SUPFAM" id="SSF69075">
    <property type="entry name" value="Glutamyl tRNA-reductase dimerization domain"/>
    <property type="match status" value="1"/>
</dbReference>
<dbReference type="SUPFAM" id="SSF51735">
    <property type="entry name" value="NAD(P)-binding Rossmann-fold domains"/>
    <property type="match status" value="1"/>
</dbReference>
<dbReference type="PROSITE" id="PS00747">
    <property type="entry name" value="GLUTR"/>
    <property type="match status" value="1"/>
</dbReference>
<reference key="1">
    <citation type="journal article" date="1989" name="J. Bacteriol.">
        <title>Cloning, genetic characterization, and nucleotide sequence of the hemA-prfA operon of Salmonella typhimurium.</title>
        <authorList>
            <person name="Elliott T."/>
        </authorList>
    </citation>
    <scope>NUCLEOTIDE SEQUENCE [GENOMIC DNA]</scope>
    <source>
        <strain>LT2</strain>
    </source>
</reference>
<reference key="2">
    <citation type="journal article" date="2001" name="Nature">
        <title>Complete genome sequence of Salmonella enterica serovar Typhimurium LT2.</title>
        <authorList>
            <person name="McClelland M."/>
            <person name="Sanderson K.E."/>
            <person name="Spieth J."/>
            <person name="Clifton S.W."/>
            <person name="Latreille P."/>
            <person name="Courtney L."/>
            <person name="Porwollik S."/>
            <person name="Ali J."/>
            <person name="Dante M."/>
            <person name="Du F."/>
            <person name="Hou S."/>
            <person name="Layman D."/>
            <person name="Leonard S."/>
            <person name="Nguyen C."/>
            <person name="Scott K."/>
            <person name="Holmes A."/>
            <person name="Grewal N."/>
            <person name="Mulvaney E."/>
            <person name="Ryan E."/>
            <person name="Sun H."/>
            <person name="Florea L."/>
            <person name="Miller W."/>
            <person name="Stoneking T."/>
            <person name="Nhan M."/>
            <person name="Waterston R."/>
            <person name="Wilson R.K."/>
        </authorList>
    </citation>
    <scope>NUCLEOTIDE SEQUENCE [LARGE SCALE GENOMIC DNA]</scope>
    <source>
        <strain>LT2 / SGSC1412 / ATCC 700720</strain>
    </source>
</reference>
<protein>
    <recommendedName>
        <fullName evidence="1">Glutamyl-tRNA reductase</fullName>
        <shortName evidence="1">GluTR</shortName>
        <ecNumber evidence="1">1.2.1.70</ecNumber>
    </recommendedName>
</protein>